<gene>
    <name evidence="1" type="primary">rsmG</name>
    <name type="ordered locus">Rcas_3365</name>
</gene>
<organism>
    <name type="scientific">Roseiflexus castenholzii (strain DSM 13941 / HLO8)</name>
    <dbReference type="NCBI Taxonomy" id="383372"/>
    <lineage>
        <taxon>Bacteria</taxon>
        <taxon>Bacillati</taxon>
        <taxon>Chloroflexota</taxon>
        <taxon>Chloroflexia</taxon>
        <taxon>Chloroflexales</taxon>
        <taxon>Roseiflexineae</taxon>
        <taxon>Roseiflexaceae</taxon>
        <taxon>Roseiflexus</taxon>
    </lineage>
</organism>
<name>RSMG_ROSCS</name>
<evidence type="ECO:0000255" key="1">
    <source>
        <dbReference type="HAMAP-Rule" id="MF_00074"/>
    </source>
</evidence>
<feature type="chain" id="PRO_0000335418" description="Ribosomal RNA small subunit methyltransferase G">
    <location>
        <begin position="1"/>
        <end position="234"/>
    </location>
</feature>
<feature type="binding site" evidence="1">
    <location>
        <position position="74"/>
    </location>
    <ligand>
        <name>S-adenosyl-L-methionine</name>
        <dbReference type="ChEBI" id="CHEBI:59789"/>
    </ligand>
</feature>
<feature type="binding site" evidence="1">
    <location>
        <position position="79"/>
    </location>
    <ligand>
        <name>S-adenosyl-L-methionine</name>
        <dbReference type="ChEBI" id="CHEBI:59789"/>
    </ligand>
</feature>
<feature type="binding site" evidence="1">
    <location>
        <begin position="125"/>
        <end position="126"/>
    </location>
    <ligand>
        <name>S-adenosyl-L-methionine</name>
        <dbReference type="ChEBI" id="CHEBI:59789"/>
    </ligand>
</feature>
<feature type="binding site" evidence="1">
    <location>
        <position position="144"/>
    </location>
    <ligand>
        <name>S-adenosyl-L-methionine</name>
        <dbReference type="ChEBI" id="CHEBI:59789"/>
    </ligand>
</feature>
<dbReference type="EC" id="2.1.1.-" evidence="1"/>
<dbReference type="EMBL" id="CP000804">
    <property type="protein sequence ID" value="ABU59415.1"/>
    <property type="molecule type" value="Genomic_DNA"/>
</dbReference>
<dbReference type="RefSeq" id="WP_012121839.1">
    <property type="nucleotide sequence ID" value="NC_009767.1"/>
</dbReference>
<dbReference type="SMR" id="A7NPB9"/>
<dbReference type="STRING" id="383372.Rcas_3365"/>
<dbReference type="KEGG" id="rca:Rcas_3365"/>
<dbReference type="eggNOG" id="COG0357">
    <property type="taxonomic scope" value="Bacteria"/>
</dbReference>
<dbReference type="HOGENOM" id="CLU_065341_0_0_0"/>
<dbReference type="OrthoDB" id="9808773at2"/>
<dbReference type="Proteomes" id="UP000000263">
    <property type="component" value="Chromosome"/>
</dbReference>
<dbReference type="GO" id="GO:0005829">
    <property type="term" value="C:cytosol"/>
    <property type="evidence" value="ECO:0007669"/>
    <property type="project" value="TreeGrafter"/>
</dbReference>
<dbReference type="GO" id="GO:0070043">
    <property type="term" value="F:rRNA (guanine-N7-)-methyltransferase activity"/>
    <property type="evidence" value="ECO:0007669"/>
    <property type="project" value="UniProtKB-UniRule"/>
</dbReference>
<dbReference type="FunFam" id="3.40.50.150:FF:000041">
    <property type="entry name" value="Ribosomal RNA small subunit methyltransferase G"/>
    <property type="match status" value="1"/>
</dbReference>
<dbReference type="Gene3D" id="3.40.50.150">
    <property type="entry name" value="Vaccinia Virus protein VP39"/>
    <property type="match status" value="1"/>
</dbReference>
<dbReference type="HAMAP" id="MF_00074">
    <property type="entry name" value="16SrRNA_methyltr_G"/>
    <property type="match status" value="1"/>
</dbReference>
<dbReference type="InterPro" id="IPR003682">
    <property type="entry name" value="rRNA_ssu_MeTfrase_G"/>
</dbReference>
<dbReference type="InterPro" id="IPR029063">
    <property type="entry name" value="SAM-dependent_MTases_sf"/>
</dbReference>
<dbReference type="NCBIfam" id="TIGR00138">
    <property type="entry name" value="rsmG_gidB"/>
    <property type="match status" value="1"/>
</dbReference>
<dbReference type="PANTHER" id="PTHR31760">
    <property type="entry name" value="S-ADENOSYL-L-METHIONINE-DEPENDENT METHYLTRANSFERASES SUPERFAMILY PROTEIN"/>
    <property type="match status" value="1"/>
</dbReference>
<dbReference type="PANTHER" id="PTHR31760:SF0">
    <property type="entry name" value="S-ADENOSYL-L-METHIONINE-DEPENDENT METHYLTRANSFERASES SUPERFAMILY PROTEIN"/>
    <property type="match status" value="1"/>
</dbReference>
<dbReference type="Pfam" id="PF02527">
    <property type="entry name" value="GidB"/>
    <property type="match status" value="1"/>
</dbReference>
<dbReference type="PIRSF" id="PIRSF003078">
    <property type="entry name" value="GidB"/>
    <property type="match status" value="1"/>
</dbReference>
<dbReference type="SUPFAM" id="SSF53335">
    <property type="entry name" value="S-adenosyl-L-methionine-dependent methyltransferases"/>
    <property type="match status" value="1"/>
</dbReference>
<reference key="1">
    <citation type="submission" date="2007-08" db="EMBL/GenBank/DDBJ databases">
        <title>Complete sequence of Roseiflexus castenholzii DSM 13941.</title>
        <authorList>
            <consortium name="US DOE Joint Genome Institute"/>
            <person name="Copeland A."/>
            <person name="Lucas S."/>
            <person name="Lapidus A."/>
            <person name="Barry K."/>
            <person name="Glavina del Rio T."/>
            <person name="Dalin E."/>
            <person name="Tice H."/>
            <person name="Pitluck S."/>
            <person name="Thompson L.S."/>
            <person name="Brettin T."/>
            <person name="Bruce D."/>
            <person name="Detter J.C."/>
            <person name="Han C."/>
            <person name="Tapia R."/>
            <person name="Schmutz J."/>
            <person name="Larimer F."/>
            <person name="Land M."/>
            <person name="Hauser L."/>
            <person name="Kyrpides N."/>
            <person name="Mikhailova N."/>
            <person name="Bryant D.A."/>
            <person name="Hanada S."/>
            <person name="Tsukatani Y."/>
            <person name="Richardson P."/>
        </authorList>
    </citation>
    <scope>NUCLEOTIDE SEQUENCE [LARGE SCALE GENOMIC DNA]</scope>
    <source>
        <strain>DSM 13941 / HLO8</strain>
    </source>
</reference>
<proteinExistence type="inferred from homology"/>
<protein>
    <recommendedName>
        <fullName evidence="1">Ribosomal RNA small subunit methyltransferase G</fullName>
        <ecNumber evidence="1">2.1.1.-</ecNumber>
    </recommendedName>
    <alternativeName>
        <fullName evidence="1">16S rRNA 7-methylguanosine methyltransferase</fullName>
        <shortName evidence="1">16S rRNA m7G methyltransferase</shortName>
    </alternativeName>
</protein>
<accession>A7NPB9</accession>
<keyword id="KW-0963">Cytoplasm</keyword>
<keyword id="KW-0489">Methyltransferase</keyword>
<keyword id="KW-1185">Reference proteome</keyword>
<keyword id="KW-0698">rRNA processing</keyword>
<keyword id="KW-0949">S-adenosyl-L-methionine</keyword>
<keyword id="KW-0808">Transferase</keyword>
<sequence>MDELLRIATSWGLRLDQRQIEQFARYSAELRAWNMRVNLTSITDEREIVTRHFLDSLRCALSWGDTPSRLIDIGSGAGFPGLPLKILHPELHVTLVESVGKKAAFLQHIVAVLDLRDVTVVTARAEVVGRDPQHREQYDVVTARAVAELATLVEYGLPLCRIGGRFLAPKGSAIDDEVVRARIAIARLGGQVIGVEPVEIPGVELRTLVVIVKVAPTPAAYPRAVGIPAKRPIL</sequence>
<comment type="function">
    <text evidence="1">Specifically methylates the N7 position of a guanine in 16S rRNA.</text>
</comment>
<comment type="subcellular location">
    <subcellularLocation>
        <location evidence="1">Cytoplasm</location>
    </subcellularLocation>
</comment>
<comment type="similarity">
    <text evidence="1">Belongs to the methyltransferase superfamily. RNA methyltransferase RsmG family.</text>
</comment>